<dbReference type="EC" id="1.14.-.-"/>
<dbReference type="EMBL" id="BC061716">
    <property type="protein sequence ID" value="AAH61716.1"/>
    <property type="molecule type" value="mRNA"/>
</dbReference>
<dbReference type="RefSeq" id="NP_955433.1">
    <property type="nucleotide sequence ID" value="NM_199401.1"/>
</dbReference>
<dbReference type="SMR" id="Q6P7D4"/>
<dbReference type="FunCoup" id="Q6P7D4">
    <property type="interactions" value="1807"/>
</dbReference>
<dbReference type="STRING" id="10116.ENSRNOP00000023796"/>
<dbReference type="iPTMnet" id="Q6P7D4"/>
<dbReference type="PhosphoSitePlus" id="Q6P7D4"/>
<dbReference type="jPOST" id="Q6P7D4"/>
<dbReference type="PaxDb" id="10116-ENSRNOP00000023796"/>
<dbReference type="GeneID" id="316435"/>
<dbReference type="KEGG" id="rno:316435"/>
<dbReference type="AGR" id="RGD:735221"/>
<dbReference type="CTD" id="57404"/>
<dbReference type="RGD" id="735221">
    <property type="gene designation" value="Cyp20a1"/>
</dbReference>
<dbReference type="eggNOG" id="KOG0157">
    <property type="taxonomic scope" value="Eukaryota"/>
</dbReference>
<dbReference type="InParanoid" id="Q6P7D4"/>
<dbReference type="OrthoDB" id="45472at9989"/>
<dbReference type="PhylomeDB" id="Q6P7D4"/>
<dbReference type="PRO" id="PR:Q6P7D4"/>
<dbReference type="Proteomes" id="UP000002494">
    <property type="component" value="Unplaced"/>
</dbReference>
<dbReference type="GO" id="GO:0016020">
    <property type="term" value="C:membrane"/>
    <property type="evidence" value="ECO:0007669"/>
    <property type="project" value="UniProtKB-SubCell"/>
</dbReference>
<dbReference type="GO" id="GO:0020037">
    <property type="term" value="F:heme binding"/>
    <property type="evidence" value="ECO:0007669"/>
    <property type="project" value="InterPro"/>
</dbReference>
<dbReference type="GO" id="GO:0005506">
    <property type="term" value="F:iron ion binding"/>
    <property type="evidence" value="ECO:0007669"/>
    <property type="project" value="InterPro"/>
</dbReference>
<dbReference type="GO" id="GO:0004497">
    <property type="term" value="F:monooxygenase activity"/>
    <property type="evidence" value="ECO:0007669"/>
    <property type="project" value="UniProtKB-KW"/>
</dbReference>
<dbReference type="GO" id="GO:0016705">
    <property type="term" value="F:oxidoreductase activity, acting on paired donors, with incorporation or reduction of molecular oxygen"/>
    <property type="evidence" value="ECO:0007669"/>
    <property type="project" value="InterPro"/>
</dbReference>
<dbReference type="Gene3D" id="1.10.630.10">
    <property type="entry name" value="Cytochrome P450"/>
    <property type="match status" value="1"/>
</dbReference>
<dbReference type="InterPro" id="IPR052666">
    <property type="entry name" value="CYP450_20A1-like"/>
</dbReference>
<dbReference type="InterPro" id="IPR001128">
    <property type="entry name" value="Cyt_P450"/>
</dbReference>
<dbReference type="InterPro" id="IPR002401">
    <property type="entry name" value="Cyt_P450_E_grp-I"/>
</dbReference>
<dbReference type="InterPro" id="IPR036396">
    <property type="entry name" value="Cyt_P450_sf"/>
</dbReference>
<dbReference type="PANTHER" id="PTHR24280">
    <property type="entry name" value="CYTOCHROME P450 20A1"/>
    <property type="match status" value="1"/>
</dbReference>
<dbReference type="PANTHER" id="PTHR24280:SF4">
    <property type="entry name" value="CYTOCHROME P450 20A1"/>
    <property type="match status" value="1"/>
</dbReference>
<dbReference type="Pfam" id="PF00067">
    <property type="entry name" value="p450"/>
    <property type="match status" value="1"/>
</dbReference>
<dbReference type="PRINTS" id="PR00463">
    <property type="entry name" value="EP450I"/>
</dbReference>
<dbReference type="SUPFAM" id="SSF48264">
    <property type="entry name" value="Cytochrome P450"/>
    <property type="match status" value="1"/>
</dbReference>
<name>CP20A_RAT</name>
<accession>Q6P7D4</accession>
<sequence length="462" mass="51998">MLDFAIFAVTFLLALVGAVLYLYPASRQASGIPGLTPTEEKDGNLPDIVNSGSLHEFLVNLHGRYGPVVSFWFGRRLVVSLGTADALKQHFNPNKTLDPFETMLKSLLGYRSGAGSGSEDHVRRRLYGDAVTAALQSNFPLLLKLSEELLDKWLSYPETQHIPLSQHMLGFALKFVTRMVLGDTFEGEQEVIRFQKIHGTVWSEIGKGFLDGSLDKNTTRKNQYQEALMQLEAILKKIIKERKGGDFSQHTFIDSLVQRNLNEQQILEDSVVFSLAGCIVTARLCTWAIHFLTTAEEVQKKLHKEVDHVLGKGPITSEKIEQLRYCQQVLCETVRTAKLTPVSAQLQDIEGKVGPFIIPKETLVLYALGVVLQDASTWPSPHKFDPDRFADEPVMKVFSSLGFSGTWECPELRFAYVVTTVLVSVLLKKLHLLAVDRQVFEMKYELVTSCREETWITVSERH</sequence>
<feature type="chain" id="PRO_0000318097" description="Cytochrome P450 20A1">
    <location>
        <begin position="1"/>
        <end position="462"/>
    </location>
</feature>
<feature type="transmembrane region" description="Helical" evidence="2">
    <location>
        <begin position="4"/>
        <end position="24"/>
    </location>
</feature>
<feature type="binding site" description="axial binding residue" evidence="1">
    <location>
        <position position="409"/>
    </location>
    <ligand>
        <name>heme</name>
        <dbReference type="ChEBI" id="CHEBI:30413"/>
    </ligand>
    <ligandPart>
        <name>Fe</name>
        <dbReference type="ChEBI" id="CHEBI:18248"/>
    </ligandPart>
</feature>
<keyword id="KW-0349">Heme</keyword>
<keyword id="KW-0408">Iron</keyword>
<keyword id="KW-0472">Membrane</keyword>
<keyword id="KW-0479">Metal-binding</keyword>
<keyword id="KW-0503">Monooxygenase</keyword>
<keyword id="KW-0560">Oxidoreductase</keyword>
<keyword id="KW-1185">Reference proteome</keyword>
<keyword id="KW-0812">Transmembrane</keyword>
<keyword id="KW-1133">Transmembrane helix</keyword>
<organism>
    <name type="scientific">Rattus norvegicus</name>
    <name type="common">Rat</name>
    <dbReference type="NCBI Taxonomy" id="10116"/>
    <lineage>
        <taxon>Eukaryota</taxon>
        <taxon>Metazoa</taxon>
        <taxon>Chordata</taxon>
        <taxon>Craniata</taxon>
        <taxon>Vertebrata</taxon>
        <taxon>Euteleostomi</taxon>
        <taxon>Mammalia</taxon>
        <taxon>Eutheria</taxon>
        <taxon>Euarchontoglires</taxon>
        <taxon>Glires</taxon>
        <taxon>Rodentia</taxon>
        <taxon>Myomorpha</taxon>
        <taxon>Muroidea</taxon>
        <taxon>Muridae</taxon>
        <taxon>Murinae</taxon>
        <taxon>Rattus</taxon>
    </lineage>
</organism>
<gene>
    <name type="primary">Cyp20a1</name>
</gene>
<reference key="1">
    <citation type="journal article" date="2004" name="Genome Res.">
        <title>The status, quality, and expansion of the NIH full-length cDNA project: the Mammalian Gene Collection (MGC).</title>
        <authorList>
            <consortium name="The MGC Project Team"/>
        </authorList>
    </citation>
    <scope>NUCLEOTIDE SEQUENCE [LARGE SCALE MRNA]</scope>
    <source>
        <tissue>Prostate</tissue>
    </source>
</reference>
<protein>
    <recommendedName>
        <fullName>Cytochrome P450 20A1</fullName>
        <ecNumber>1.14.-.-</ecNumber>
    </recommendedName>
</protein>
<proteinExistence type="evidence at transcript level"/>
<comment type="cofactor">
    <cofactor evidence="1">
        <name>heme</name>
        <dbReference type="ChEBI" id="CHEBI:30413"/>
    </cofactor>
</comment>
<comment type="subcellular location">
    <subcellularLocation>
        <location evidence="3">Membrane</location>
        <topology evidence="3">Single-pass membrane protein</topology>
    </subcellularLocation>
</comment>
<comment type="similarity">
    <text evidence="3">Belongs to the cytochrome P450 family.</text>
</comment>
<evidence type="ECO:0000250" key="1"/>
<evidence type="ECO:0000255" key="2"/>
<evidence type="ECO:0000305" key="3"/>